<sequence>MRWVQRTSLVTQIAIAVVIGIVLAAVWPAATPHLAILGSLFISALKAVAPVLVFVLVMSAISNHTPGETTHIRPVLVLYAVGTLAAATVGVVASMWFPSTLTLQAPAQAAAGPGSVSEVLMNVLKSVVENPVKALLEANYIGILAWAIALGLALRHASAGTRAMLQDGAAAVTQVIQLVIRLAPLGILGLVASTFAEAGAQALWGYAQLLAVLLGCMLFVALVVNPLIVYVAIRRNPYPLVLMCLRESGVTAFFTRSSAANIPINLALAKRLRLNEDTYSIAIPLGATINMAGAAITISVLSLAAANTLGIQVDLPTALLLCVVASLCACGASGVAGGSLLLIPLACSLFGIGNDVAMQVVAIGFIIGILQDSAETALNSSTDVIFTAAACLAQERKAQV</sequence>
<organism>
    <name type="scientific">Acidovorax sp. (strain JS42)</name>
    <dbReference type="NCBI Taxonomy" id="232721"/>
    <lineage>
        <taxon>Bacteria</taxon>
        <taxon>Pseudomonadati</taxon>
        <taxon>Pseudomonadota</taxon>
        <taxon>Betaproteobacteria</taxon>
        <taxon>Burkholderiales</taxon>
        <taxon>Comamonadaceae</taxon>
        <taxon>Acidovorax</taxon>
    </lineage>
</organism>
<gene>
    <name evidence="1" type="primary">sstT</name>
    <name type="ordered locus">Ajs_2269</name>
</gene>
<keyword id="KW-0029">Amino-acid transport</keyword>
<keyword id="KW-0997">Cell inner membrane</keyword>
<keyword id="KW-1003">Cell membrane</keyword>
<keyword id="KW-0472">Membrane</keyword>
<keyword id="KW-0769">Symport</keyword>
<keyword id="KW-0812">Transmembrane</keyword>
<keyword id="KW-1133">Transmembrane helix</keyword>
<keyword id="KW-0813">Transport</keyword>
<accession>A1W857</accession>
<comment type="function">
    <text evidence="1">Involved in the import of serine and threonine into the cell, with the concomitant import of sodium (symport system).</text>
</comment>
<comment type="catalytic activity">
    <reaction evidence="1">
        <text>L-serine(in) + Na(+)(in) = L-serine(out) + Na(+)(out)</text>
        <dbReference type="Rhea" id="RHEA:29575"/>
        <dbReference type="ChEBI" id="CHEBI:29101"/>
        <dbReference type="ChEBI" id="CHEBI:33384"/>
    </reaction>
    <physiologicalReaction direction="right-to-left" evidence="1">
        <dbReference type="Rhea" id="RHEA:29577"/>
    </physiologicalReaction>
</comment>
<comment type="catalytic activity">
    <reaction evidence="1">
        <text>L-threonine(in) + Na(+)(in) = L-threonine(out) + Na(+)(out)</text>
        <dbReference type="Rhea" id="RHEA:69999"/>
        <dbReference type="ChEBI" id="CHEBI:29101"/>
        <dbReference type="ChEBI" id="CHEBI:57926"/>
    </reaction>
    <physiologicalReaction direction="right-to-left" evidence="1">
        <dbReference type="Rhea" id="RHEA:70001"/>
    </physiologicalReaction>
</comment>
<comment type="subcellular location">
    <subcellularLocation>
        <location evidence="1">Cell inner membrane</location>
        <topology evidence="1">Multi-pass membrane protein</topology>
    </subcellularLocation>
</comment>
<comment type="similarity">
    <text evidence="1">Belongs to the dicarboxylate/amino acid:cation symporter (DAACS) (TC 2.A.23) family.</text>
</comment>
<feature type="chain" id="PRO_0000309163" description="Serine/threonine transporter SstT">
    <location>
        <begin position="1"/>
        <end position="400"/>
    </location>
</feature>
<feature type="transmembrane region" description="Helical" evidence="1">
    <location>
        <begin position="9"/>
        <end position="29"/>
    </location>
</feature>
<feature type="transmembrane region" description="Helical" evidence="1">
    <location>
        <begin position="36"/>
        <end position="56"/>
    </location>
</feature>
<feature type="transmembrane region" description="Helical" evidence="1">
    <location>
        <begin position="75"/>
        <end position="95"/>
    </location>
</feature>
<feature type="transmembrane region" description="Helical" evidence="1">
    <location>
        <begin position="134"/>
        <end position="154"/>
    </location>
</feature>
<feature type="transmembrane region" description="Helical" evidence="1">
    <location>
        <begin position="175"/>
        <end position="195"/>
    </location>
</feature>
<feature type="transmembrane region" description="Helical" evidence="1">
    <location>
        <begin position="209"/>
        <end position="229"/>
    </location>
</feature>
<feature type="transmembrane region" description="Helical" evidence="1">
    <location>
        <begin position="281"/>
        <end position="301"/>
    </location>
</feature>
<feature type="transmembrane region" description="Helical" evidence="1">
    <location>
        <begin position="323"/>
        <end position="343"/>
    </location>
</feature>
<feature type="transmembrane region" description="Helical" evidence="1">
    <location>
        <begin position="349"/>
        <end position="369"/>
    </location>
</feature>
<proteinExistence type="inferred from homology"/>
<name>SSTT_ACISJ</name>
<evidence type="ECO:0000255" key="1">
    <source>
        <dbReference type="HAMAP-Rule" id="MF_01582"/>
    </source>
</evidence>
<protein>
    <recommendedName>
        <fullName evidence="1">Serine/threonine transporter SstT</fullName>
    </recommendedName>
    <alternativeName>
        <fullName evidence="1">Na(+)/serine-threonine symporter</fullName>
    </alternativeName>
</protein>
<dbReference type="EMBL" id="CP000539">
    <property type="protein sequence ID" value="ABM42432.1"/>
    <property type="molecule type" value="Genomic_DNA"/>
</dbReference>
<dbReference type="SMR" id="A1W857"/>
<dbReference type="STRING" id="232721.Ajs_2269"/>
<dbReference type="KEGG" id="ajs:Ajs_2269"/>
<dbReference type="eggNOG" id="COG3633">
    <property type="taxonomic scope" value="Bacteria"/>
</dbReference>
<dbReference type="HOGENOM" id="CLU_044581_0_0_4"/>
<dbReference type="Proteomes" id="UP000000645">
    <property type="component" value="Chromosome"/>
</dbReference>
<dbReference type="GO" id="GO:0005886">
    <property type="term" value="C:plasma membrane"/>
    <property type="evidence" value="ECO:0007669"/>
    <property type="project" value="UniProtKB-SubCell"/>
</dbReference>
<dbReference type="GO" id="GO:0005295">
    <property type="term" value="F:neutral L-amino acid:sodium symporter activity"/>
    <property type="evidence" value="ECO:0007669"/>
    <property type="project" value="TreeGrafter"/>
</dbReference>
<dbReference type="GO" id="GO:0032329">
    <property type="term" value="P:serine transport"/>
    <property type="evidence" value="ECO:0007669"/>
    <property type="project" value="InterPro"/>
</dbReference>
<dbReference type="GO" id="GO:0015826">
    <property type="term" value="P:threonine transport"/>
    <property type="evidence" value="ECO:0007669"/>
    <property type="project" value="InterPro"/>
</dbReference>
<dbReference type="FunFam" id="1.10.3860.10:FF:000003">
    <property type="entry name" value="Serine/threonine transporter sstT"/>
    <property type="match status" value="1"/>
</dbReference>
<dbReference type="Gene3D" id="1.10.3860.10">
    <property type="entry name" value="Sodium:dicarboxylate symporter"/>
    <property type="match status" value="1"/>
</dbReference>
<dbReference type="HAMAP" id="MF_01582">
    <property type="entry name" value="Ser_Thr_transp_SstT"/>
    <property type="match status" value="1"/>
</dbReference>
<dbReference type="InterPro" id="IPR001991">
    <property type="entry name" value="Na-dicarboxylate_symporter"/>
</dbReference>
<dbReference type="InterPro" id="IPR036458">
    <property type="entry name" value="Na:dicarbo_symporter_sf"/>
</dbReference>
<dbReference type="InterPro" id="IPR023025">
    <property type="entry name" value="Ser_Thr_transp_SstT"/>
</dbReference>
<dbReference type="NCBIfam" id="NF010151">
    <property type="entry name" value="PRK13628.1"/>
    <property type="match status" value="1"/>
</dbReference>
<dbReference type="PANTHER" id="PTHR42865">
    <property type="entry name" value="PROTON/GLUTAMATE-ASPARTATE SYMPORTER"/>
    <property type="match status" value="1"/>
</dbReference>
<dbReference type="PANTHER" id="PTHR42865:SF8">
    <property type="entry name" value="SERINE_THREONINE TRANSPORTER SSTT"/>
    <property type="match status" value="1"/>
</dbReference>
<dbReference type="Pfam" id="PF00375">
    <property type="entry name" value="SDF"/>
    <property type="match status" value="1"/>
</dbReference>
<dbReference type="PRINTS" id="PR00173">
    <property type="entry name" value="EDTRNSPORT"/>
</dbReference>
<dbReference type="SUPFAM" id="SSF118215">
    <property type="entry name" value="Proton glutamate symport protein"/>
    <property type="match status" value="1"/>
</dbReference>
<reference key="1">
    <citation type="submission" date="2006-12" db="EMBL/GenBank/DDBJ databases">
        <title>Complete sequence of chromosome 1 of Acidovorax sp. JS42.</title>
        <authorList>
            <person name="Copeland A."/>
            <person name="Lucas S."/>
            <person name="Lapidus A."/>
            <person name="Barry K."/>
            <person name="Detter J.C."/>
            <person name="Glavina del Rio T."/>
            <person name="Dalin E."/>
            <person name="Tice H."/>
            <person name="Pitluck S."/>
            <person name="Chertkov O."/>
            <person name="Brettin T."/>
            <person name="Bruce D."/>
            <person name="Han C."/>
            <person name="Tapia R."/>
            <person name="Gilna P."/>
            <person name="Schmutz J."/>
            <person name="Larimer F."/>
            <person name="Land M."/>
            <person name="Hauser L."/>
            <person name="Kyrpides N."/>
            <person name="Kim E."/>
            <person name="Stahl D."/>
            <person name="Richardson P."/>
        </authorList>
    </citation>
    <scope>NUCLEOTIDE SEQUENCE [LARGE SCALE GENOMIC DNA]</scope>
    <source>
        <strain>JS42</strain>
    </source>
</reference>